<protein>
    <recommendedName>
        <fullName>Cytochrome b-c1 complex subunit 1, mitochondrial</fullName>
    </recommendedName>
    <alternativeName>
        <fullName>Complex III subunit 1</fullName>
    </alternativeName>
    <alternativeName>
        <fullName>Core protein I</fullName>
    </alternativeName>
    <alternativeName>
        <fullName>Ubiquinol-cytochrome-c reductase complex core protein 1</fullName>
    </alternativeName>
</protein>
<organism>
    <name type="scientific">Bos taurus</name>
    <name type="common">Bovine</name>
    <dbReference type="NCBI Taxonomy" id="9913"/>
    <lineage>
        <taxon>Eukaryota</taxon>
        <taxon>Metazoa</taxon>
        <taxon>Chordata</taxon>
        <taxon>Craniata</taxon>
        <taxon>Vertebrata</taxon>
        <taxon>Euteleostomi</taxon>
        <taxon>Mammalia</taxon>
        <taxon>Eutheria</taxon>
        <taxon>Laurasiatheria</taxon>
        <taxon>Artiodactyla</taxon>
        <taxon>Ruminantia</taxon>
        <taxon>Pecora</taxon>
        <taxon>Bovidae</taxon>
        <taxon>Bovinae</taxon>
        <taxon>Bos</taxon>
    </lineage>
</organism>
<name>QCR1_BOVIN</name>
<sequence>MAASAVCRAAGAGTRVLLRTRRSPALLRSSDLRGTATYAQALQSVPETQVSQLDNGLRVASEQSSQPTCTVGVWIDAGSRYESEKNNGAGYFVEHLAFKGTKNRPGNALEKEVESMGAHLNAYSTREHTAYYIKALSKDLPKAVELLADIVQNCSLEDSQIEKERDVILQELQENDTSMRDVVFNYLHATAFQGTPLAQSVEGPSENVRKLSRADLTEYLSRHYKAPRMVLAAAGGLEHRQLLDLAQKHFSGLSGTYDEDAVPTLSPCRFTGSQICHREDGLPLAHVAIAVEGPGWAHPDNVALQVANAIIGHYDCTYGGGAHLSSPLASIAATNKLCQSFQTFNICYADTGLLGAHFVCDHMSIDDMMFVLQGQWMRLCTSATESEVLRGKNLLRNALVSHLDGTTPVCEDIGRSLLTYGRRIPLAEWESRIAEVDARVVREVCSKYFYDQCPAVAGFGPIEQLPDYNRIRSGMFWLRF</sequence>
<gene>
    <name type="primary">UQCRC1</name>
</gene>
<feature type="transit peptide" description="Mitochondrion" evidence="7">
    <location>
        <begin position="1"/>
        <end position="34"/>
    </location>
</feature>
<feature type="chain" id="PRO_0000026785" description="Cytochrome b-c1 complex subunit 1, mitochondrial">
    <location>
        <begin position="35"/>
        <end position="480"/>
    </location>
</feature>
<feature type="modified residue" description="N6-acetyllysine" evidence="2">
    <location>
        <position position="111"/>
    </location>
</feature>
<feature type="modified residue" description="N6-acetyllysine" evidence="4">
    <location>
        <position position="138"/>
    </location>
</feature>
<feature type="modified residue" description="N6-acetyllysine; alternate" evidence="4">
    <location>
        <position position="163"/>
    </location>
</feature>
<feature type="modified residue" description="N6-succinyllysine; alternate" evidence="4">
    <location>
        <position position="163"/>
    </location>
</feature>
<feature type="modified residue" description="Phosphoserine" evidence="3">
    <location>
        <position position="212"/>
    </location>
</feature>
<feature type="modified residue" description="N6-acetyllysine" evidence="4">
    <location>
        <position position="248"/>
    </location>
</feature>
<feature type="helix" evidence="14">
    <location>
        <begin position="38"/>
        <end position="42"/>
    </location>
</feature>
<feature type="strand" evidence="14">
    <location>
        <begin position="49"/>
        <end position="52"/>
    </location>
</feature>
<feature type="strand" evidence="12">
    <location>
        <begin position="54"/>
        <end position="56"/>
    </location>
</feature>
<feature type="strand" evidence="14">
    <location>
        <begin position="58"/>
        <end position="63"/>
    </location>
</feature>
<feature type="strand" evidence="14">
    <location>
        <begin position="67"/>
        <end position="76"/>
    </location>
</feature>
<feature type="helix" evidence="14">
    <location>
        <begin position="79"/>
        <end position="81"/>
    </location>
</feature>
<feature type="turn" evidence="14">
    <location>
        <begin position="84"/>
        <end position="88"/>
    </location>
</feature>
<feature type="helix" evidence="14">
    <location>
        <begin position="89"/>
        <end position="96"/>
    </location>
</feature>
<feature type="strand" evidence="15">
    <location>
        <begin position="97"/>
        <end position="99"/>
    </location>
</feature>
<feature type="strand" evidence="14">
    <location>
        <begin position="101"/>
        <end position="104"/>
    </location>
</feature>
<feature type="turn" evidence="14">
    <location>
        <begin position="105"/>
        <end position="107"/>
    </location>
</feature>
<feature type="helix" evidence="14">
    <location>
        <begin position="108"/>
        <end position="115"/>
    </location>
</feature>
<feature type="strand" evidence="14">
    <location>
        <begin position="119"/>
        <end position="124"/>
    </location>
</feature>
<feature type="strand" evidence="14">
    <location>
        <begin position="129"/>
        <end position="136"/>
    </location>
</feature>
<feature type="helix" evidence="14">
    <location>
        <begin position="137"/>
        <end position="139"/>
    </location>
</feature>
<feature type="helix" evidence="14">
    <location>
        <begin position="140"/>
        <end position="153"/>
    </location>
</feature>
<feature type="helix" evidence="14">
    <location>
        <begin position="158"/>
        <end position="175"/>
    </location>
</feature>
<feature type="helix" evidence="14">
    <location>
        <begin position="179"/>
        <end position="191"/>
    </location>
</feature>
<feature type="turn" evidence="14">
    <location>
        <begin position="192"/>
        <end position="194"/>
    </location>
</feature>
<feature type="helix" evidence="14">
    <location>
        <begin position="196"/>
        <end position="198"/>
    </location>
</feature>
<feature type="helix" evidence="14">
    <location>
        <begin position="205"/>
        <end position="210"/>
    </location>
</feature>
<feature type="helix" evidence="14">
    <location>
        <begin position="213"/>
        <end position="223"/>
    </location>
</feature>
<feature type="helix" evidence="14">
    <location>
        <begin position="226"/>
        <end position="228"/>
    </location>
</feature>
<feature type="strand" evidence="14">
    <location>
        <begin position="229"/>
        <end position="236"/>
    </location>
</feature>
<feature type="helix" evidence="14">
    <location>
        <begin position="239"/>
        <end position="250"/>
    </location>
</feature>
<feature type="strand" evidence="16">
    <location>
        <begin position="252"/>
        <end position="256"/>
    </location>
</feature>
<feature type="strand" evidence="13">
    <location>
        <begin position="259"/>
        <end position="261"/>
    </location>
</feature>
<feature type="strand" evidence="14">
    <location>
        <begin position="273"/>
        <end position="279"/>
    </location>
</feature>
<feature type="strand" evidence="14">
    <location>
        <begin position="282"/>
        <end position="293"/>
    </location>
</feature>
<feature type="helix" evidence="14">
    <location>
        <begin position="301"/>
        <end position="311"/>
    </location>
</feature>
<feature type="strand" evidence="14">
    <location>
        <begin position="313"/>
        <end position="315"/>
    </location>
</feature>
<feature type="helix" evidence="14">
    <location>
        <begin position="321"/>
        <end position="323"/>
    </location>
</feature>
<feature type="helix" evidence="14">
    <location>
        <begin position="327"/>
        <end position="335"/>
    </location>
</feature>
<feature type="strand" evidence="14">
    <location>
        <begin position="339"/>
        <end position="347"/>
    </location>
</feature>
<feature type="strand" evidence="14">
    <location>
        <begin position="352"/>
        <end position="360"/>
    </location>
</feature>
<feature type="helix" evidence="13">
    <location>
        <begin position="362"/>
        <end position="364"/>
    </location>
</feature>
<feature type="helix" evidence="14">
    <location>
        <begin position="365"/>
        <end position="382"/>
    </location>
</feature>
<feature type="helix" evidence="14">
    <location>
        <begin position="385"/>
        <end position="402"/>
    </location>
</feature>
<feature type="helix" evidence="14">
    <location>
        <begin position="406"/>
        <end position="419"/>
    </location>
</feature>
<feature type="strand" evidence="17">
    <location>
        <begin position="420"/>
        <end position="422"/>
    </location>
</feature>
<feature type="helix" evidence="14">
    <location>
        <begin position="426"/>
        <end position="434"/>
    </location>
</feature>
<feature type="helix" evidence="14">
    <location>
        <begin position="438"/>
        <end position="448"/>
    </location>
</feature>
<feature type="turn" evidence="14">
    <location>
        <begin position="449"/>
        <end position="451"/>
    </location>
</feature>
<feature type="strand" evidence="14">
    <location>
        <begin position="455"/>
        <end position="461"/>
    </location>
</feature>
<feature type="strand" evidence="18">
    <location>
        <begin position="463"/>
        <end position="465"/>
    </location>
</feature>
<feature type="helix" evidence="14">
    <location>
        <begin position="468"/>
        <end position="473"/>
    </location>
</feature>
<feature type="strand" evidence="18">
    <location>
        <begin position="476"/>
        <end position="478"/>
    </location>
</feature>
<proteinExistence type="evidence at protein level"/>
<keyword id="KW-0002">3D-structure</keyword>
<keyword id="KW-0007">Acetylation</keyword>
<keyword id="KW-0903">Direct protein sequencing</keyword>
<keyword id="KW-0249">Electron transport</keyword>
<keyword id="KW-0472">Membrane</keyword>
<keyword id="KW-0496">Mitochondrion</keyword>
<keyword id="KW-0999">Mitochondrion inner membrane</keyword>
<keyword id="KW-0597">Phosphoprotein</keyword>
<keyword id="KW-1185">Reference proteome</keyword>
<keyword id="KW-0679">Respiratory chain</keyword>
<keyword id="KW-0809">Transit peptide</keyword>
<keyword id="KW-0813">Transport</keyword>
<dbReference type="EMBL" id="X59692">
    <property type="protein sequence ID" value="CAA42213.1"/>
    <property type="molecule type" value="mRNA"/>
</dbReference>
<dbReference type="PIR" id="S16220">
    <property type="entry name" value="ZPBOC1"/>
</dbReference>
<dbReference type="RefSeq" id="NP_777054.1">
    <property type="nucleotide sequence ID" value="NM_174629.2"/>
</dbReference>
<dbReference type="PDB" id="1BCC">
    <property type="method" value="X-ray"/>
    <property type="resolution" value="3.16 A"/>
    <property type="chains" value="A=35-480"/>
</dbReference>
<dbReference type="PDB" id="1BE3">
    <property type="method" value="X-ray"/>
    <property type="resolution" value="3.00 A"/>
    <property type="chains" value="A=35-480"/>
</dbReference>
<dbReference type="PDB" id="1BGY">
    <property type="method" value="X-ray"/>
    <property type="resolution" value="3.00 A"/>
    <property type="chains" value="A/M=35-480"/>
</dbReference>
<dbReference type="PDB" id="1L0L">
    <property type="method" value="X-ray"/>
    <property type="resolution" value="2.35 A"/>
    <property type="chains" value="A=35-480"/>
</dbReference>
<dbReference type="PDB" id="1L0N">
    <property type="method" value="X-ray"/>
    <property type="resolution" value="2.60 A"/>
    <property type="chains" value="A=35-480"/>
</dbReference>
<dbReference type="PDB" id="1NTK">
    <property type="method" value="X-ray"/>
    <property type="resolution" value="2.60 A"/>
    <property type="chains" value="A=35-480"/>
</dbReference>
<dbReference type="PDB" id="1NTM">
    <property type="method" value="X-ray"/>
    <property type="resolution" value="2.40 A"/>
    <property type="chains" value="A=35-480"/>
</dbReference>
<dbReference type="PDB" id="1NTZ">
    <property type="method" value="X-ray"/>
    <property type="resolution" value="2.60 A"/>
    <property type="chains" value="A=35-480"/>
</dbReference>
<dbReference type="PDB" id="1NU1">
    <property type="method" value="X-ray"/>
    <property type="resolution" value="3.20 A"/>
    <property type="chains" value="A=35-480"/>
</dbReference>
<dbReference type="PDB" id="1PP9">
    <property type="method" value="X-ray"/>
    <property type="resolution" value="2.10 A"/>
    <property type="chains" value="A/N=35-480"/>
</dbReference>
<dbReference type="PDB" id="1PPJ">
    <property type="method" value="X-ray"/>
    <property type="resolution" value="2.10 A"/>
    <property type="chains" value="A/N=35-480"/>
</dbReference>
<dbReference type="PDB" id="1QCR">
    <property type="method" value="X-ray"/>
    <property type="resolution" value="2.70 A"/>
    <property type="chains" value="A=35-480"/>
</dbReference>
<dbReference type="PDB" id="1SQB">
    <property type="method" value="X-ray"/>
    <property type="resolution" value="2.69 A"/>
    <property type="chains" value="A=1-480"/>
</dbReference>
<dbReference type="PDB" id="1SQP">
    <property type="method" value="X-ray"/>
    <property type="resolution" value="2.70 A"/>
    <property type="chains" value="A=1-480"/>
</dbReference>
<dbReference type="PDB" id="1SQQ">
    <property type="method" value="X-ray"/>
    <property type="resolution" value="3.00 A"/>
    <property type="chains" value="A=35-480"/>
</dbReference>
<dbReference type="PDB" id="1SQV">
    <property type="method" value="X-ray"/>
    <property type="resolution" value="2.85 A"/>
    <property type="chains" value="A=35-480"/>
</dbReference>
<dbReference type="PDB" id="1SQX">
    <property type="method" value="X-ray"/>
    <property type="resolution" value="2.60 A"/>
    <property type="chains" value="A=35-480"/>
</dbReference>
<dbReference type="PDB" id="2A06">
    <property type="method" value="X-ray"/>
    <property type="resolution" value="2.10 A"/>
    <property type="chains" value="A/N=35-480"/>
</dbReference>
<dbReference type="PDB" id="2BCC">
    <property type="method" value="X-ray"/>
    <property type="resolution" value="3.50 A"/>
    <property type="chains" value="A=35-480"/>
</dbReference>
<dbReference type="PDB" id="2FYU">
    <property type="method" value="X-ray"/>
    <property type="resolution" value="2.26 A"/>
    <property type="chains" value="A=35-480"/>
</dbReference>
<dbReference type="PDB" id="2YBB">
    <property type="method" value="EM"/>
    <property type="resolution" value="19.00 A"/>
    <property type="chains" value="A/a=35-480"/>
</dbReference>
<dbReference type="PDB" id="3BCC">
    <property type="method" value="X-ray"/>
    <property type="resolution" value="3.70 A"/>
    <property type="chains" value="A=35-480"/>
</dbReference>
<dbReference type="PDB" id="4D6T">
    <property type="method" value="X-ray"/>
    <property type="resolution" value="3.57 A"/>
    <property type="chains" value="A/N=1-480"/>
</dbReference>
<dbReference type="PDB" id="4D6U">
    <property type="method" value="X-ray"/>
    <property type="resolution" value="4.09 A"/>
    <property type="chains" value="A=1-480"/>
</dbReference>
<dbReference type="PDB" id="5GPN">
    <property type="method" value="EM"/>
    <property type="resolution" value="5.40 A"/>
    <property type="chains" value="A/M=35-480"/>
</dbReference>
<dbReference type="PDB" id="5KLV">
    <property type="method" value="X-ray"/>
    <property type="resolution" value="2.65 A"/>
    <property type="chains" value="A=35-480"/>
</dbReference>
<dbReference type="PDB" id="5LUF">
    <property type="method" value="EM"/>
    <property type="resolution" value="9.10 A"/>
    <property type="chains" value="c/l=35-480"/>
</dbReference>
<dbReference type="PDB" id="5NMI">
    <property type="method" value="X-ray"/>
    <property type="resolution" value="3.50 A"/>
    <property type="chains" value="A/N=36-479"/>
</dbReference>
<dbReference type="PDB" id="5OKD">
    <property type="method" value="X-ray"/>
    <property type="resolution" value="3.10 A"/>
    <property type="chains" value="A=1-480"/>
</dbReference>
<dbReference type="PDB" id="6FO0">
    <property type="method" value="EM"/>
    <property type="resolution" value="4.10 A"/>
    <property type="chains" value="A/N=1-480"/>
</dbReference>
<dbReference type="PDB" id="6FO2">
    <property type="method" value="EM"/>
    <property type="resolution" value="4.40 A"/>
    <property type="chains" value="A/N=1-480"/>
</dbReference>
<dbReference type="PDB" id="6FO6">
    <property type="method" value="EM"/>
    <property type="resolution" value="4.10 A"/>
    <property type="chains" value="A/N=1-480"/>
</dbReference>
<dbReference type="PDB" id="6HAW">
    <property type="method" value="X-ray"/>
    <property type="resolution" value="3.45 A"/>
    <property type="chains" value="A=36-479"/>
</dbReference>
<dbReference type="PDB" id="6NHG">
    <property type="method" value="X-ray"/>
    <property type="resolution" value="2.80 A"/>
    <property type="chains" value="A=35-480"/>
</dbReference>
<dbReference type="PDB" id="6XVF">
    <property type="method" value="X-ray"/>
    <property type="resolution" value="3.50 A"/>
    <property type="chains" value="A=36-480"/>
</dbReference>
<dbReference type="PDB" id="6ZFS">
    <property type="method" value="X-ray"/>
    <property type="resolution" value="3.50 A"/>
    <property type="chains" value="A=36-479"/>
</dbReference>
<dbReference type="PDB" id="6ZFT">
    <property type="method" value="X-ray"/>
    <property type="resolution" value="3.30 A"/>
    <property type="chains" value="A=37-480"/>
</dbReference>
<dbReference type="PDB" id="6ZFU">
    <property type="method" value="X-ray"/>
    <property type="resolution" value="3.50 A"/>
    <property type="chains" value="A=36-479"/>
</dbReference>
<dbReference type="PDB" id="7DGQ">
    <property type="method" value="EM"/>
    <property type="resolution" value="5.00 A"/>
    <property type="chains" value="k/w=1-480"/>
</dbReference>
<dbReference type="PDB" id="7DGR">
    <property type="method" value="EM"/>
    <property type="resolution" value="4.60 A"/>
    <property type="chains" value="k/w=1-480"/>
</dbReference>
<dbReference type="PDB" id="7DGS">
    <property type="method" value="EM"/>
    <property type="resolution" value="7.80 A"/>
    <property type="chains" value="k/w=1-480"/>
</dbReference>
<dbReference type="PDB" id="7DKF">
    <property type="method" value="EM"/>
    <property type="resolution" value="8.30 A"/>
    <property type="chains" value="A1/M1=1-480"/>
</dbReference>
<dbReference type="PDB" id="7R3V">
    <property type="method" value="X-ray"/>
    <property type="resolution" value="3.20 A"/>
    <property type="chains" value="A=36-480"/>
</dbReference>
<dbReference type="PDB" id="7TAY">
    <property type="method" value="X-ray"/>
    <property type="resolution" value="2.95 A"/>
    <property type="chains" value="A=35-480"/>
</dbReference>
<dbReference type="PDB" id="7TZ6">
    <property type="method" value="EM"/>
    <property type="resolution" value="2.88 A"/>
    <property type="chains" value="A/N=35-480"/>
</dbReference>
<dbReference type="PDB" id="8P65">
    <property type="method" value="EM"/>
    <property type="resolution" value="3.00 A"/>
    <property type="chains" value="A/N=35-480"/>
</dbReference>
<dbReference type="PDB" id="9GCX">
    <property type="method" value="X-ray"/>
    <property type="resolution" value="3.52 A"/>
    <property type="chains" value="A=1-480"/>
</dbReference>
<dbReference type="PDBsum" id="1BCC"/>
<dbReference type="PDBsum" id="1BE3"/>
<dbReference type="PDBsum" id="1BGY"/>
<dbReference type="PDBsum" id="1L0L"/>
<dbReference type="PDBsum" id="1L0N"/>
<dbReference type="PDBsum" id="1NTK"/>
<dbReference type="PDBsum" id="1NTM"/>
<dbReference type="PDBsum" id="1NTZ"/>
<dbReference type="PDBsum" id="1NU1"/>
<dbReference type="PDBsum" id="1PP9"/>
<dbReference type="PDBsum" id="1PPJ"/>
<dbReference type="PDBsum" id="1QCR"/>
<dbReference type="PDBsum" id="1SQB"/>
<dbReference type="PDBsum" id="1SQP"/>
<dbReference type="PDBsum" id="1SQQ"/>
<dbReference type="PDBsum" id="1SQV"/>
<dbReference type="PDBsum" id="1SQX"/>
<dbReference type="PDBsum" id="2A06"/>
<dbReference type="PDBsum" id="2BCC"/>
<dbReference type="PDBsum" id="2FYU"/>
<dbReference type="PDBsum" id="2YBB"/>
<dbReference type="PDBsum" id="3BCC"/>
<dbReference type="PDBsum" id="4D6T"/>
<dbReference type="PDBsum" id="4D6U"/>
<dbReference type="PDBsum" id="5GPN"/>
<dbReference type="PDBsum" id="5KLV"/>
<dbReference type="PDBsum" id="5LUF"/>
<dbReference type="PDBsum" id="5NMI"/>
<dbReference type="PDBsum" id="5OKD"/>
<dbReference type="PDBsum" id="6FO0"/>
<dbReference type="PDBsum" id="6FO2"/>
<dbReference type="PDBsum" id="6FO6"/>
<dbReference type="PDBsum" id="6HAW"/>
<dbReference type="PDBsum" id="6NHG"/>
<dbReference type="PDBsum" id="6XVF"/>
<dbReference type="PDBsum" id="6ZFS"/>
<dbReference type="PDBsum" id="6ZFT"/>
<dbReference type="PDBsum" id="6ZFU"/>
<dbReference type="PDBsum" id="7DGQ"/>
<dbReference type="PDBsum" id="7DGR"/>
<dbReference type="PDBsum" id="7DGS"/>
<dbReference type="PDBsum" id="7DKF"/>
<dbReference type="PDBsum" id="7R3V"/>
<dbReference type="PDBsum" id="7TAY"/>
<dbReference type="PDBsum" id="7TZ6"/>
<dbReference type="PDBsum" id="8P65"/>
<dbReference type="PDBsum" id="9GCX"/>
<dbReference type="EMDB" id="EMD-17461"/>
<dbReference type="EMDB" id="EMD-26203"/>
<dbReference type="EMDB" id="EMD-30673"/>
<dbReference type="EMDB" id="EMD-4107"/>
<dbReference type="EMDB" id="EMD-4286"/>
<dbReference type="EMDB" id="EMD-4288"/>
<dbReference type="EMDB" id="EMD-4292"/>
<dbReference type="EMDB" id="EMD-9534"/>
<dbReference type="SMR" id="P31800"/>
<dbReference type="CORUM" id="P31800"/>
<dbReference type="DIP" id="DIP-1105N"/>
<dbReference type="FunCoup" id="P31800">
    <property type="interactions" value="2032"/>
</dbReference>
<dbReference type="IntAct" id="P31800">
    <property type="interactions" value="3"/>
</dbReference>
<dbReference type="STRING" id="9913.ENSBTAP00000025422"/>
<dbReference type="MEROPS" id="M16.973"/>
<dbReference type="MEROPS" id="M16.981"/>
<dbReference type="GlyGen" id="P31800">
    <property type="glycosylation" value="1 site, 1 O-linked glycan (1 site)"/>
</dbReference>
<dbReference type="PaxDb" id="9913-ENSBTAP00000025422"/>
<dbReference type="PeptideAtlas" id="P31800"/>
<dbReference type="GeneID" id="282393"/>
<dbReference type="KEGG" id="bta:282393"/>
<dbReference type="CTD" id="7384"/>
<dbReference type="eggNOG" id="KOG0960">
    <property type="taxonomic scope" value="Eukaryota"/>
</dbReference>
<dbReference type="InParanoid" id="P31800"/>
<dbReference type="OrthoDB" id="10251424at2759"/>
<dbReference type="BRENDA" id="7.1.1.8">
    <property type="organism ID" value="908"/>
</dbReference>
<dbReference type="EvolutionaryTrace" id="P31800"/>
<dbReference type="Proteomes" id="UP000009136">
    <property type="component" value="Unplaced"/>
</dbReference>
<dbReference type="GO" id="GO:0005743">
    <property type="term" value="C:mitochondrial inner membrane"/>
    <property type="evidence" value="ECO:0000250"/>
    <property type="project" value="AgBase"/>
</dbReference>
<dbReference type="GO" id="GO:0005739">
    <property type="term" value="C:mitochondrion"/>
    <property type="evidence" value="ECO:0000250"/>
    <property type="project" value="AgBase"/>
</dbReference>
<dbReference type="GO" id="GO:0046872">
    <property type="term" value="F:metal ion binding"/>
    <property type="evidence" value="ECO:0007669"/>
    <property type="project" value="InterPro"/>
</dbReference>
<dbReference type="FunFam" id="3.30.830.10:FF:000016">
    <property type="entry name" value="Cytochrome b-c1 complex subunit 1, mitochondrial"/>
    <property type="match status" value="1"/>
</dbReference>
<dbReference type="FunFam" id="3.30.830.10:FF:000001">
    <property type="entry name" value="Mitochondrial-processing peptidase subunit beta, mitochondrial"/>
    <property type="match status" value="1"/>
</dbReference>
<dbReference type="Gene3D" id="3.30.830.10">
    <property type="entry name" value="Metalloenzyme, LuxS/M16 peptidase-like"/>
    <property type="match status" value="2"/>
</dbReference>
<dbReference type="InterPro" id="IPR011249">
    <property type="entry name" value="Metalloenz_LuxS/M16"/>
</dbReference>
<dbReference type="InterPro" id="IPR050361">
    <property type="entry name" value="MPP/UQCRC_Complex"/>
</dbReference>
<dbReference type="InterPro" id="IPR011765">
    <property type="entry name" value="Pept_M16_N"/>
</dbReference>
<dbReference type="InterPro" id="IPR007863">
    <property type="entry name" value="Peptidase_M16_C"/>
</dbReference>
<dbReference type="PANTHER" id="PTHR11851:SF116">
    <property type="entry name" value="CYTOCHROME B-C1 COMPLEX SUBUNIT 1, MITOCHONDRIAL"/>
    <property type="match status" value="1"/>
</dbReference>
<dbReference type="PANTHER" id="PTHR11851">
    <property type="entry name" value="METALLOPROTEASE"/>
    <property type="match status" value="1"/>
</dbReference>
<dbReference type="Pfam" id="PF00675">
    <property type="entry name" value="Peptidase_M16"/>
    <property type="match status" value="1"/>
</dbReference>
<dbReference type="Pfam" id="PF05193">
    <property type="entry name" value="Peptidase_M16_C"/>
    <property type="match status" value="1"/>
</dbReference>
<dbReference type="SUPFAM" id="SSF63411">
    <property type="entry name" value="LuxS/MPP-like metallohydrolase"/>
    <property type="match status" value="2"/>
</dbReference>
<accession>P31800</accession>
<reference key="1">
    <citation type="journal article" date="1991" name="Eur. J. Biochem.">
        <title>Core I protein of bovine ubiquinol-cytochrome-c reductase; an additional member of the mitochondrial-protein-processing family. Cloning of bovine core I and core II cDNAs and primary structure of the proteins.</title>
        <authorList>
            <person name="Gencic S."/>
            <person name="Schaegger H."/>
            <person name="von Jagow G."/>
        </authorList>
    </citation>
    <scope>NUCLEOTIDE SEQUENCE [MRNA]</scope>
    <source>
        <tissue>Heart</tissue>
    </source>
</reference>
<reference key="2">
    <citation type="journal article" date="1995" name="Methods Enzymol.">
        <title>Ubiquinol-cytochrome-c reductase from human and bovine mitochondria.</title>
        <authorList>
            <person name="Schaegger H."/>
            <person name="Brandt U."/>
            <person name="Gencic S."/>
            <person name="von Jagow G."/>
        </authorList>
    </citation>
    <scope>SEQUENCE REVISION TO C-TERMINUS</scope>
</reference>
<reference key="3">
    <citation type="journal article" date="1988" name="Biochemistry">
        <title>Subunit arrangement in beef heart complex III.</title>
        <authorList>
            <person name="Gonzalez-Halphen D."/>
            <person name="Lindorfer M.A."/>
            <person name="Capaldi R.M."/>
        </authorList>
    </citation>
    <scope>PROTEIN SEQUENCE OF 35-52</scope>
</reference>
<reference key="4">
    <citation type="journal article" date="1998" name="J. Biol. Chem.">
        <title>Activation of a matrix processing peptidase from the crystalline cytochrome bc1 complex of bovine heart mitochondria.</title>
        <authorList>
            <person name="Deng K."/>
            <person name="Zhang L."/>
            <person name="Kachurin A.M."/>
            <person name="Yu L."/>
            <person name="Xia D."/>
            <person name="Kim H."/>
            <person name="Deisenhofer J."/>
            <person name="Yu C.A."/>
        </authorList>
    </citation>
    <scope>FUNCTION</scope>
</reference>
<reference key="5">
    <citation type="journal article" date="2001" name="J. Biol. Chem.">
        <title>Reconstitution of mitochondrial processing peptidase from the core proteins (subunits I and II) of bovine heart mitochondrial cytochrome bc(1) complex.</title>
        <authorList>
            <person name="Deng K."/>
            <person name="Shenoy S.K."/>
            <person name="Tso S.C."/>
            <person name="Yu L."/>
            <person name="Yu C.A."/>
        </authorList>
    </citation>
    <scope>FUNCTION</scope>
</reference>
<reference key="6">
    <citation type="journal article" date="2018" name="Cell Cycle">
        <title>Mitochondrial complex III Rieske Fe-S protein processing and assembly.</title>
        <authorList>
            <person name="Fernandez-Vizarra E."/>
            <person name="Zeviani M."/>
        </authorList>
    </citation>
    <scope>FUNCTION</scope>
</reference>
<reference key="7">
    <citation type="journal article" date="1997" name="Science">
        <title>Crystal structure of the cytochrome bc1 complex from bovine heart mitochondria.</title>
        <authorList>
            <person name="Xia D."/>
            <person name="Yu C.A."/>
            <person name="Kim H."/>
            <person name="Xia J.Z."/>
            <person name="Kachurin A.M."/>
            <person name="Zhang L."/>
            <person name="Yu L."/>
            <person name="Deisenhofer J."/>
        </authorList>
    </citation>
    <scope>X-RAY CRYSTALLOGRAPHY (2.7 ANGSTROMS)</scope>
</reference>
<reference key="8">
    <citation type="journal article" date="1997" name="Science">
        <authorList>
            <person name="Xia D."/>
            <person name="Yu C.A."/>
            <person name="Kim H."/>
            <person name="Xia J.Z."/>
            <person name="Kachurin A.M."/>
            <person name="Zhang L."/>
            <person name="Yu L."/>
            <person name="Deisenhofer J."/>
        </authorList>
    </citation>
    <scope>ERRATUM OF PUBMED:9204897</scope>
</reference>
<reference key="9">
    <citation type="journal article" date="1998" name="Science">
        <title>Complete structure of the 11-subunit bovine mitochondrial cytochrome bc1 complex.</title>
        <authorList>
            <person name="Iwata S."/>
            <person name="Lee J.W."/>
            <person name="Okada K."/>
            <person name="Lee J.K."/>
            <person name="Iwata M."/>
            <person name="Rasmussen B."/>
            <person name="Link T.A."/>
            <person name="Ramaswamy S."/>
            <person name="Jap B.K."/>
        </authorList>
    </citation>
    <scope>X-RAY CRYSTALLOGRAPHY (3.0 ANGSTROMS)</scope>
</reference>
<reference key="10">
    <citation type="journal article" date="2002" name="Biochemistry">
        <title>The crystal structure of mitochondrial cytochrome bc1 in complex with famoxadone: the role of aromatic-aromatic interaction in inhibition.</title>
        <authorList>
            <person name="Gao X."/>
            <person name="Wen X."/>
            <person name="Yu C."/>
            <person name="Esser L."/>
            <person name="Tsao S."/>
            <person name="Quinn B."/>
            <person name="Zhang L."/>
            <person name="Yu L."/>
            <person name="Xia D."/>
        </authorList>
    </citation>
    <scope>X-RAY CRYSTALLOGRAPHY (2.35 ANGSTROMS)</scope>
</reference>
<reference key="11">
    <citation type="journal article" date="2004" name="J. Mol. Biol.">
        <title>Crystallographic studies of quinol oxidation site inhibitors: a modified classification of inhibitors for the cytochrome bc(1) complex.</title>
        <authorList>
            <person name="Esser L."/>
            <person name="Quinn B."/>
            <person name="Li Y.F."/>
            <person name="Zhang M."/>
            <person name="Elberry M."/>
            <person name="Yu L."/>
            <person name="Yu C.A."/>
            <person name="Xia D."/>
        </authorList>
    </citation>
    <scope>X-RAY CRYSTALLOGRAPHY (2.69 ANGSTROMS)</scope>
</reference>
<reference key="12">
    <citation type="journal article" date="2005" name="J. Mol. Biol.">
        <title>Binding of the respiratory chain inhibitor antimycin to the mitochondrial bc1 complex: a new crystal structure reveals an altered intramolecular hydrogen-bonding pattern.</title>
        <authorList>
            <person name="Huang L.S."/>
            <person name="Cobessi D."/>
            <person name="Tung E.Y."/>
            <person name="Berry E.A."/>
        </authorList>
    </citation>
    <scope>X-RAY CRYSTALLOGRAPHY (2.1 ANGSTROMS)</scope>
</reference>
<reference key="13">
    <citation type="journal article" date="2006" name="Proc. Natl. Acad. Sci. U.S.A.">
        <title>Surface-modulated motion switch: capture and release of iron-sulfur protein in the cytochrome bc1 complex.</title>
        <authorList>
            <person name="Esser L."/>
            <person name="Gong X."/>
            <person name="Yang S."/>
            <person name="Yu L."/>
            <person name="Yu C.A."/>
            <person name="Xia D."/>
        </authorList>
    </citation>
    <scope>X-RAY CRYSTALLOGRAPHY (2.26 ANGSTROMS)</scope>
</reference>
<reference key="14">
    <citation type="journal article" date="2016" name="Elife">
        <title>Functional asymmetry and electron flow in the bovine respirasome.</title>
        <authorList>
            <person name="Sousa J.S."/>
            <person name="Mills D.J."/>
            <person name="Vonck J."/>
            <person name="Kuehlbrandt W."/>
        </authorList>
    </citation>
    <scope>STRUCTURE BY ELECTRON MICROSCOPY (9.10 ANGSTROMS)</scope>
    <scope>SUBUNIT</scope>
</reference>
<comment type="function">
    <text evidence="1 2 5 9 11">Component of the ubiquinol-cytochrome c oxidoreductase, a multisubunit transmembrane complex that is part of the mitochondrial electron transport chain which drives oxidative phosphorylation. The respiratory chain contains 3 multisubunit complexes succinate dehydrogenase (complex II, CII), ubiquinol-cytochrome c oxidoreductase (cytochrome b-c1 complex, complex III, CIII) and cytochrome c oxidase (complex IV, CIV), that cooperate to transfer electrons derived from NADH and succinate to molecular oxygen, creating an electrochemical gradient over the inner membrane that drives transmembrane transport and the ATP synthase. The cytochrome b-c1 complex catalyzes electron transfer from ubiquinol to cytochrome c, linking this redox reaction to translocation of protons across the mitochondrial inner membrane, with protons being carried across the membrane as hydrogens on the quinol. In the process called Q cycle, 2 protons are consumed from the matrix, 4 protons are released into the intermembrane space and 2 electrons are passed to cytochrome c (By similarity). The 2 core subunits UQCRC1/QCR1 and UQCRC2/QCR2 are homologous to the 2 mitochondrial-processing peptidase (MPP) subunits beta-MPP and alpha-MPP respectively, and they seem to have preserved their MPP processing properties (PubMed:11073949, PubMed:9694818). May be involved in the in situ processing of UQCRFS1 into the mature Rieske protein and its mitochondrial targeting sequence (MTS)/subunit 9 when incorporated into complex III (Probable). Seems to play an important role in the maintenance of proper mitochondrial function in nigral dopaminergic neurons (By similarity).</text>
</comment>
<comment type="subunit">
    <text evidence="2 4 6 8">Component of the ubiquinol-cytochrome c oxidoreductase (cytochrome b-c1 complex, complex III, CIII), a multisubunit enzyme composed of 11 subunits. The complex is composed of 3 respiratory subunits cytochrome b, cytochrome c1 and Rieske protein UQCRFS1, 2 core protein subunits UQCRC1/QCR1 and UQCRC2/QCR2, and 6 low-molecular weight protein subunits UQCRH/QCR6, UQCRB/QCR7, UQCRQ/QCR8, UQCR10/QCR9, UQCR11/QCR10 and subunit 9, the cleavage product of Rieske protein UQCRFS1 (PubMed:9651245). The complex exists as an obligatory dimer and forms supercomplexes (SCs) in the inner mitochondrial membrane with NADH-ubiquinone oxidoreductase (complex I, CI) and cytochrome c oxidase (complex IV, CIV), resulting in different assemblies (supercomplex SCI(1)III(2)IV(1) and megacomplex MCI(2)III(2)IV(2)) (PubMed:27830641). Interacts with UQCC6 (By similarity). Interacts with STMP1 (By similarity).</text>
</comment>
<comment type="subcellular location">
    <subcellularLocation>
        <location evidence="1">Mitochondrion inner membrane</location>
        <topology evidence="1">Peripheral membrane protein</topology>
        <orientation evidence="1">Matrix side</orientation>
    </subcellularLocation>
</comment>
<comment type="similarity">
    <text evidence="10">Belongs to the peptidase M16 family. UQCRC1/QCR1 subfamily.</text>
</comment>
<evidence type="ECO:0000250" key="1">
    <source>
        <dbReference type="UniProtKB" id="P07256"/>
    </source>
</evidence>
<evidence type="ECO:0000250" key="2">
    <source>
        <dbReference type="UniProtKB" id="P31930"/>
    </source>
</evidence>
<evidence type="ECO:0000250" key="3">
    <source>
        <dbReference type="UniProtKB" id="Q68FY0"/>
    </source>
</evidence>
<evidence type="ECO:0000250" key="4">
    <source>
        <dbReference type="UniProtKB" id="Q9CZ13"/>
    </source>
</evidence>
<evidence type="ECO:0000269" key="5">
    <source>
    </source>
</evidence>
<evidence type="ECO:0000269" key="6">
    <source>
    </source>
</evidence>
<evidence type="ECO:0000269" key="7">
    <source>
    </source>
</evidence>
<evidence type="ECO:0000269" key="8">
    <source>
    </source>
</evidence>
<evidence type="ECO:0000269" key="9">
    <source>
    </source>
</evidence>
<evidence type="ECO:0000305" key="10"/>
<evidence type="ECO:0000305" key="11">
    <source>
    </source>
</evidence>
<evidence type="ECO:0007829" key="12">
    <source>
        <dbReference type="PDB" id="1L0N"/>
    </source>
</evidence>
<evidence type="ECO:0007829" key="13">
    <source>
        <dbReference type="PDB" id="1NTM"/>
    </source>
</evidence>
<evidence type="ECO:0007829" key="14">
    <source>
        <dbReference type="PDB" id="1PP9"/>
    </source>
</evidence>
<evidence type="ECO:0007829" key="15">
    <source>
        <dbReference type="PDB" id="2BCC"/>
    </source>
</evidence>
<evidence type="ECO:0007829" key="16">
    <source>
        <dbReference type="PDB" id="2FYU"/>
    </source>
</evidence>
<evidence type="ECO:0007829" key="17">
    <source>
        <dbReference type="PDB" id="5KLV"/>
    </source>
</evidence>
<evidence type="ECO:0007829" key="18">
    <source>
        <dbReference type="PDB" id="8P65"/>
    </source>
</evidence>